<comment type="function">
    <text evidence="1">One of the primary rRNA binding proteins, it binds directly near the 3'-end of the 23S rRNA, where it nucleates assembly of the 50S subunit.</text>
</comment>
<comment type="subunit">
    <text evidence="1">Part of the 50S ribosomal subunit. Forms a cluster with proteins L14 and L19.</text>
</comment>
<comment type="PTM">
    <text evidence="1">Methylated by PrmB.</text>
</comment>
<comment type="similarity">
    <text evidence="1">Belongs to the universal ribosomal protein uL3 family.</text>
</comment>
<evidence type="ECO:0000255" key="1">
    <source>
        <dbReference type="HAMAP-Rule" id="MF_01325"/>
    </source>
</evidence>
<evidence type="ECO:0000256" key="2">
    <source>
        <dbReference type="SAM" id="MobiDB-lite"/>
    </source>
</evidence>
<evidence type="ECO:0000305" key="3"/>
<organism>
    <name type="scientific">Ralstonia pickettii (strain 12J)</name>
    <dbReference type="NCBI Taxonomy" id="402626"/>
    <lineage>
        <taxon>Bacteria</taxon>
        <taxon>Pseudomonadati</taxon>
        <taxon>Pseudomonadota</taxon>
        <taxon>Betaproteobacteria</taxon>
        <taxon>Burkholderiales</taxon>
        <taxon>Burkholderiaceae</taxon>
        <taxon>Ralstonia</taxon>
    </lineage>
</organism>
<dbReference type="EMBL" id="CP001068">
    <property type="protein sequence ID" value="ACD28419.1"/>
    <property type="molecule type" value="Genomic_DNA"/>
</dbReference>
<dbReference type="SMR" id="B2UEL9"/>
<dbReference type="STRING" id="402626.Rpic_3297"/>
<dbReference type="KEGG" id="rpi:Rpic_3297"/>
<dbReference type="eggNOG" id="COG0087">
    <property type="taxonomic scope" value="Bacteria"/>
</dbReference>
<dbReference type="HOGENOM" id="CLU_044142_4_1_4"/>
<dbReference type="GO" id="GO:0022625">
    <property type="term" value="C:cytosolic large ribosomal subunit"/>
    <property type="evidence" value="ECO:0007669"/>
    <property type="project" value="TreeGrafter"/>
</dbReference>
<dbReference type="GO" id="GO:0019843">
    <property type="term" value="F:rRNA binding"/>
    <property type="evidence" value="ECO:0007669"/>
    <property type="project" value="UniProtKB-UniRule"/>
</dbReference>
<dbReference type="GO" id="GO:0003735">
    <property type="term" value="F:structural constituent of ribosome"/>
    <property type="evidence" value="ECO:0007669"/>
    <property type="project" value="InterPro"/>
</dbReference>
<dbReference type="GO" id="GO:0006412">
    <property type="term" value="P:translation"/>
    <property type="evidence" value="ECO:0007669"/>
    <property type="project" value="UniProtKB-UniRule"/>
</dbReference>
<dbReference type="FunFam" id="2.40.30.10:FF:000004">
    <property type="entry name" value="50S ribosomal protein L3"/>
    <property type="match status" value="1"/>
</dbReference>
<dbReference type="FunFam" id="3.30.160.810:FF:000001">
    <property type="entry name" value="50S ribosomal protein L3"/>
    <property type="match status" value="1"/>
</dbReference>
<dbReference type="Gene3D" id="3.30.160.810">
    <property type="match status" value="1"/>
</dbReference>
<dbReference type="Gene3D" id="2.40.30.10">
    <property type="entry name" value="Translation factors"/>
    <property type="match status" value="1"/>
</dbReference>
<dbReference type="HAMAP" id="MF_01325_B">
    <property type="entry name" value="Ribosomal_uL3_B"/>
    <property type="match status" value="1"/>
</dbReference>
<dbReference type="InterPro" id="IPR000597">
    <property type="entry name" value="Ribosomal_uL3"/>
</dbReference>
<dbReference type="InterPro" id="IPR019927">
    <property type="entry name" value="Ribosomal_uL3_bac/org-type"/>
</dbReference>
<dbReference type="InterPro" id="IPR019926">
    <property type="entry name" value="Ribosomal_uL3_CS"/>
</dbReference>
<dbReference type="InterPro" id="IPR009000">
    <property type="entry name" value="Transl_B-barrel_sf"/>
</dbReference>
<dbReference type="NCBIfam" id="TIGR03625">
    <property type="entry name" value="L3_bact"/>
    <property type="match status" value="1"/>
</dbReference>
<dbReference type="PANTHER" id="PTHR11229">
    <property type="entry name" value="50S RIBOSOMAL PROTEIN L3"/>
    <property type="match status" value="1"/>
</dbReference>
<dbReference type="PANTHER" id="PTHR11229:SF16">
    <property type="entry name" value="LARGE RIBOSOMAL SUBUNIT PROTEIN UL3C"/>
    <property type="match status" value="1"/>
</dbReference>
<dbReference type="Pfam" id="PF00297">
    <property type="entry name" value="Ribosomal_L3"/>
    <property type="match status" value="1"/>
</dbReference>
<dbReference type="SUPFAM" id="SSF50447">
    <property type="entry name" value="Translation proteins"/>
    <property type="match status" value="1"/>
</dbReference>
<dbReference type="PROSITE" id="PS00474">
    <property type="entry name" value="RIBOSOMAL_L3"/>
    <property type="match status" value="1"/>
</dbReference>
<keyword id="KW-0488">Methylation</keyword>
<keyword id="KW-0687">Ribonucleoprotein</keyword>
<keyword id="KW-0689">Ribosomal protein</keyword>
<keyword id="KW-0694">RNA-binding</keyword>
<keyword id="KW-0699">rRNA-binding</keyword>
<reference key="1">
    <citation type="submission" date="2008-05" db="EMBL/GenBank/DDBJ databases">
        <title>Complete sequence of chromosome 1 of Ralstonia pickettii 12J.</title>
        <authorList>
            <person name="Lucas S."/>
            <person name="Copeland A."/>
            <person name="Lapidus A."/>
            <person name="Glavina del Rio T."/>
            <person name="Dalin E."/>
            <person name="Tice H."/>
            <person name="Bruce D."/>
            <person name="Goodwin L."/>
            <person name="Pitluck S."/>
            <person name="Meincke L."/>
            <person name="Brettin T."/>
            <person name="Detter J.C."/>
            <person name="Han C."/>
            <person name="Kuske C.R."/>
            <person name="Schmutz J."/>
            <person name="Larimer F."/>
            <person name="Land M."/>
            <person name="Hauser L."/>
            <person name="Kyrpides N."/>
            <person name="Mikhailova N."/>
            <person name="Marsh T."/>
            <person name="Richardson P."/>
        </authorList>
    </citation>
    <scope>NUCLEOTIDE SEQUENCE [LARGE SCALE GENOMIC DNA]</scope>
    <source>
        <strain>12J</strain>
    </source>
</reference>
<gene>
    <name evidence="1" type="primary">rplC</name>
    <name type="ordered locus">Rpic_3297</name>
</gene>
<protein>
    <recommendedName>
        <fullName evidence="1">Large ribosomal subunit protein uL3</fullName>
    </recommendedName>
    <alternativeName>
        <fullName evidence="3">50S ribosomal protein L3</fullName>
    </alternativeName>
</protein>
<proteinExistence type="inferred from homology"/>
<accession>B2UEL9</accession>
<feature type="chain" id="PRO_1000141906" description="Large ribosomal subunit protein uL3">
    <location>
        <begin position="1"/>
        <end position="217"/>
    </location>
</feature>
<feature type="region of interest" description="Disordered" evidence="2">
    <location>
        <begin position="133"/>
        <end position="153"/>
    </location>
</feature>
<feature type="compositionally biased region" description="Polar residues" evidence="2">
    <location>
        <begin position="133"/>
        <end position="145"/>
    </location>
</feature>
<feature type="modified residue" description="N5-methylglutamine" evidence="1">
    <location>
        <position position="153"/>
    </location>
</feature>
<sequence>MSLGLVGRKVGMTRIFTDDGDSIPVTVLEVGDNRVTQIKTDETDGYTAVQVTFGTRRASRVTKPLAGHLAKAGVEAGEVIKEFRVDAARAAEFQPGANISVDLFEVGQKIDVQGVTIGKGYAGTIKRYNFSSGRASHGNSRSHNVPGSIGMAQDPGRVFPGKRMTGHMGDVTRTVQNLEIAKIDAERKLLLVKGAIPGAKGGQVIVTPAVKARAKKA</sequence>
<name>RL3_RALPJ</name>